<sequence length="209" mass="24746">MTFNIINLETWDRKEYFNHYFNQQTTYSVTKELDITLLKSMIKNKGYELYPALIHAIVSVINRNKVFRTGINSEGNLGYWDKLEPLYTVFNKETENFSNIWTESNASFTLFYNSYKNDLIKYKDKNEMFPKKPIPENTVPISMIPWIDFSSFNLNIGNNSRFLLPIITIGKFYSKDDKIYLPFPLQVHHAVCDGYHVSLFMNEFQNIIR</sequence>
<organism>
    <name type="scientific">Staphylococcus aureus</name>
    <dbReference type="NCBI Taxonomy" id="1280"/>
    <lineage>
        <taxon>Bacteria</taxon>
        <taxon>Bacillati</taxon>
        <taxon>Bacillota</taxon>
        <taxon>Bacilli</taxon>
        <taxon>Bacillales</taxon>
        <taxon>Staphylococcaceae</taxon>
        <taxon>Staphylococcus</taxon>
    </lineage>
</organism>
<proteinExistence type="inferred from homology"/>
<dbReference type="EC" id="2.3.1.28"/>
<dbReference type="EMBL" id="M58516">
    <property type="protein sequence ID" value="AAA16529.1"/>
    <property type="molecule type" value="Unassigned_DNA"/>
</dbReference>
<dbReference type="PIR" id="A61152">
    <property type="entry name" value="A61152"/>
</dbReference>
<dbReference type="RefSeq" id="WP_063843210.1">
    <property type="nucleotide sequence ID" value="NG_047571.1"/>
</dbReference>
<dbReference type="SMR" id="P36883"/>
<dbReference type="GO" id="GO:0008811">
    <property type="term" value="F:chloramphenicol O-acetyltransferase activity"/>
    <property type="evidence" value="ECO:0007669"/>
    <property type="project" value="UniProtKB-EC"/>
</dbReference>
<dbReference type="GO" id="GO:0046677">
    <property type="term" value="P:response to antibiotic"/>
    <property type="evidence" value="ECO:0007669"/>
    <property type="project" value="UniProtKB-KW"/>
</dbReference>
<dbReference type="Gene3D" id="3.30.559.10">
    <property type="entry name" value="Chloramphenicol acetyltransferase-like domain"/>
    <property type="match status" value="1"/>
</dbReference>
<dbReference type="InterPro" id="IPR023213">
    <property type="entry name" value="CAT-like_dom_sf"/>
</dbReference>
<dbReference type="InterPro" id="IPR018372">
    <property type="entry name" value="Chloramphenicol_AcTrfase_AS"/>
</dbReference>
<dbReference type="InterPro" id="IPR001707">
    <property type="entry name" value="Cmp_AcTrfase"/>
</dbReference>
<dbReference type="NCBIfam" id="NF000491">
    <property type="entry name" value="chloram_CatA"/>
    <property type="match status" value="1"/>
</dbReference>
<dbReference type="PANTHER" id="PTHR38474:SF2">
    <property type="entry name" value="CHLORAMPHENICOL ACETYLTRANSFERASE"/>
    <property type="match status" value="1"/>
</dbReference>
<dbReference type="PANTHER" id="PTHR38474">
    <property type="entry name" value="SLR0299 PROTEIN"/>
    <property type="match status" value="1"/>
</dbReference>
<dbReference type="Pfam" id="PF00302">
    <property type="entry name" value="CAT"/>
    <property type="match status" value="1"/>
</dbReference>
<dbReference type="PIRSF" id="PIRSF000440">
    <property type="entry name" value="CAT"/>
    <property type="match status" value="1"/>
</dbReference>
<dbReference type="SMART" id="SM01059">
    <property type="entry name" value="CAT"/>
    <property type="match status" value="1"/>
</dbReference>
<dbReference type="SUPFAM" id="SSF52777">
    <property type="entry name" value="CoA-dependent acyltransferases"/>
    <property type="match status" value="1"/>
</dbReference>
<dbReference type="PROSITE" id="PS00100">
    <property type="entry name" value="CAT"/>
    <property type="match status" value="1"/>
</dbReference>
<comment type="function">
    <text>This enzyme is an effector of chloramphenicol resistance in bacteria.</text>
</comment>
<comment type="catalytic activity">
    <reaction evidence="1">
        <text>chloramphenicol + acetyl-CoA = chloramphenicol 3-acetate + CoA</text>
        <dbReference type="Rhea" id="RHEA:18421"/>
        <dbReference type="ChEBI" id="CHEBI:16730"/>
        <dbReference type="ChEBI" id="CHEBI:17698"/>
        <dbReference type="ChEBI" id="CHEBI:57287"/>
        <dbReference type="ChEBI" id="CHEBI:57288"/>
        <dbReference type="EC" id="2.3.1.28"/>
    </reaction>
</comment>
<comment type="subunit">
    <text>Homotrimer.</text>
</comment>
<comment type="similarity">
    <text evidence="2">Belongs to the chloramphenicol acetyltransferase family.</text>
</comment>
<evidence type="ECO:0000255" key="1">
    <source>
        <dbReference type="PROSITE-ProRule" id="PRU10021"/>
    </source>
</evidence>
<evidence type="ECO:0000305" key="2"/>
<reference key="1">
    <citation type="journal article" date="1991" name="Antimicrob. Agents Chemother.">
        <title>Nucleotide sequence and phylogeny of a chloramphenicol acetyltransferase encoded by the plasmid pSCS7 from Staphylococcus aureus.</title>
        <authorList>
            <person name="Schwarz S."/>
            <person name="Cardoso M."/>
        </authorList>
    </citation>
    <scope>NUCLEOTIDE SEQUENCE [GENOMIC DNA]</scope>
    <source>
        <strain>436</strain>
    </source>
</reference>
<feature type="chain" id="PRO_0000165874" description="Chloramphenicol acetyltransferase">
    <location>
        <begin position="1"/>
        <end position="209"/>
    </location>
</feature>
<feature type="active site" description="Proton acceptor" evidence="1">
    <location>
        <position position="189"/>
    </location>
</feature>
<geneLocation type="plasmid">
    <name>pSCS7</name>
</geneLocation>
<protein>
    <recommendedName>
        <fullName>Chloramphenicol acetyltransferase</fullName>
        <shortName>CAT</shortName>
        <ecNumber>2.3.1.28</ecNumber>
    </recommendedName>
</protein>
<keyword id="KW-0012">Acyltransferase</keyword>
<keyword id="KW-0046">Antibiotic resistance</keyword>
<keyword id="KW-0614">Plasmid</keyword>
<keyword id="KW-0808">Transferase</keyword>
<accession>P36883</accession>
<name>CAT5_STAAU</name>